<dbReference type="EMBL" id="L42023">
    <property type="protein sequence ID" value="AAC22456.1"/>
    <property type="molecule type" value="Genomic_DNA"/>
</dbReference>
<dbReference type="PIR" id="G64094">
    <property type="entry name" value="G64094"/>
</dbReference>
<dbReference type="RefSeq" id="NP_438957.1">
    <property type="nucleotide sequence ID" value="NC_000907.1"/>
</dbReference>
<dbReference type="SMR" id="P43804"/>
<dbReference type="STRING" id="71421.HI_0798"/>
<dbReference type="EnsemblBacteria" id="AAC22456">
    <property type="protein sequence ID" value="AAC22456"/>
    <property type="gene ID" value="HI_0798"/>
</dbReference>
<dbReference type="KEGG" id="hin:HI_0798"/>
<dbReference type="PATRIC" id="fig|71421.8.peg.837"/>
<dbReference type="eggNOG" id="COG0201">
    <property type="taxonomic scope" value="Bacteria"/>
</dbReference>
<dbReference type="HOGENOM" id="CLU_030313_0_2_6"/>
<dbReference type="OrthoDB" id="9809248at2"/>
<dbReference type="PhylomeDB" id="P43804"/>
<dbReference type="BioCyc" id="HINF71421:G1GJ1-838-MONOMER"/>
<dbReference type="Proteomes" id="UP000000579">
    <property type="component" value="Chromosome"/>
</dbReference>
<dbReference type="GO" id="GO:0031522">
    <property type="term" value="C:cell envelope Sec protein transport complex"/>
    <property type="evidence" value="ECO:0000318"/>
    <property type="project" value="GO_Central"/>
</dbReference>
<dbReference type="GO" id="GO:0005886">
    <property type="term" value="C:plasma membrane"/>
    <property type="evidence" value="ECO:0000318"/>
    <property type="project" value="GO_Central"/>
</dbReference>
<dbReference type="GO" id="GO:0008320">
    <property type="term" value="F:protein transmembrane transporter activity"/>
    <property type="evidence" value="ECO:0000318"/>
    <property type="project" value="GO_Central"/>
</dbReference>
<dbReference type="GO" id="GO:0005048">
    <property type="term" value="F:signal sequence binding"/>
    <property type="evidence" value="ECO:0000318"/>
    <property type="project" value="GO_Central"/>
</dbReference>
<dbReference type="GO" id="GO:0043952">
    <property type="term" value="P:protein transport by the Sec complex"/>
    <property type="evidence" value="ECO:0007669"/>
    <property type="project" value="UniProtKB-UniRule"/>
</dbReference>
<dbReference type="GO" id="GO:0006616">
    <property type="term" value="P:SRP-dependent cotranslational protein targeting to membrane, translocation"/>
    <property type="evidence" value="ECO:0000318"/>
    <property type="project" value="GO_Central"/>
</dbReference>
<dbReference type="FunFam" id="1.10.3370.10:FF:000001">
    <property type="entry name" value="Preprotein translocase subunit SecY"/>
    <property type="match status" value="1"/>
</dbReference>
<dbReference type="Gene3D" id="1.10.3370.10">
    <property type="entry name" value="SecY subunit domain"/>
    <property type="match status" value="1"/>
</dbReference>
<dbReference type="HAMAP" id="MF_01465">
    <property type="entry name" value="SecY"/>
    <property type="match status" value="1"/>
</dbReference>
<dbReference type="InterPro" id="IPR026593">
    <property type="entry name" value="SecY"/>
</dbReference>
<dbReference type="InterPro" id="IPR002208">
    <property type="entry name" value="SecY/SEC61-alpha"/>
</dbReference>
<dbReference type="InterPro" id="IPR030659">
    <property type="entry name" value="SecY_CS"/>
</dbReference>
<dbReference type="InterPro" id="IPR023201">
    <property type="entry name" value="SecY_dom_sf"/>
</dbReference>
<dbReference type="NCBIfam" id="TIGR00967">
    <property type="entry name" value="3a0501s007"/>
    <property type="match status" value="1"/>
</dbReference>
<dbReference type="PANTHER" id="PTHR10906">
    <property type="entry name" value="SECY/SEC61-ALPHA FAMILY MEMBER"/>
    <property type="match status" value="1"/>
</dbReference>
<dbReference type="Pfam" id="PF00344">
    <property type="entry name" value="SecY"/>
    <property type="match status" value="1"/>
</dbReference>
<dbReference type="PIRSF" id="PIRSF004557">
    <property type="entry name" value="SecY"/>
    <property type="match status" value="1"/>
</dbReference>
<dbReference type="PRINTS" id="PR00303">
    <property type="entry name" value="SECYTRNLCASE"/>
</dbReference>
<dbReference type="SUPFAM" id="SSF103491">
    <property type="entry name" value="Preprotein translocase SecY subunit"/>
    <property type="match status" value="1"/>
</dbReference>
<dbReference type="PROSITE" id="PS00755">
    <property type="entry name" value="SECY_1"/>
    <property type="match status" value="1"/>
</dbReference>
<dbReference type="PROSITE" id="PS00756">
    <property type="entry name" value="SECY_2"/>
    <property type="match status" value="1"/>
</dbReference>
<reference key="1">
    <citation type="journal article" date="1995" name="Science">
        <title>Whole-genome random sequencing and assembly of Haemophilus influenzae Rd.</title>
        <authorList>
            <person name="Fleischmann R.D."/>
            <person name="Adams M.D."/>
            <person name="White O."/>
            <person name="Clayton R.A."/>
            <person name="Kirkness E.F."/>
            <person name="Kerlavage A.R."/>
            <person name="Bult C.J."/>
            <person name="Tomb J.-F."/>
            <person name="Dougherty B.A."/>
            <person name="Merrick J.M."/>
            <person name="McKenney K."/>
            <person name="Sutton G.G."/>
            <person name="FitzHugh W."/>
            <person name="Fields C.A."/>
            <person name="Gocayne J.D."/>
            <person name="Scott J.D."/>
            <person name="Shirley R."/>
            <person name="Liu L.-I."/>
            <person name="Glodek A."/>
            <person name="Kelley J.M."/>
            <person name="Weidman J.F."/>
            <person name="Phillips C.A."/>
            <person name="Spriggs T."/>
            <person name="Hedblom E."/>
            <person name="Cotton M.D."/>
            <person name="Utterback T.R."/>
            <person name="Hanna M.C."/>
            <person name="Nguyen D.T."/>
            <person name="Saudek D.M."/>
            <person name="Brandon R.C."/>
            <person name="Fine L.D."/>
            <person name="Fritchman J.L."/>
            <person name="Fuhrmann J.L."/>
            <person name="Geoghagen N.S.M."/>
            <person name="Gnehm C.L."/>
            <person name="McDonald L.A."/>
            <person name="Small K.V."/>
            <person name="Fraser C.M."/>
            <person name="Smith H.O."/>
            <person name="Venter J.C."/>
        </authorList>
    </citation>
    <scope>NUCLEOTIDE SEQUENCE [LARGE SCALE GENOMIC DNA]</scope>
    <source>
        <strain>ATCC 51907 / DSM 11121 / KW20 / Rd</strain>
    </source>
</reference>
<comment type="function">
    <text evidence="1">The central subunit of the protein translocation channel SecYEG. Consists of two halves formed by TMs 1-5 and 6-10. These two domains form a lateral gate at the front which open onto the bilayer between TMs 2 and 7, and are clamped together by SecE at the back. The channel is closed by both a pore ring composed of hydrophobic SecY resides and a short helix (helix 2A) on the extracellular side of the membrane which forms a plug. The plug probably moves laterally to allow the channel to open. The ring and the pore may move independently.</text>
</comment>
<comment type="subunit">
    <text evidence="1">Component of the Sec protein translocase complex. Heterotrimer consisting of SecY, SecE and SecG subunits. The heterotrimers can form oligomers, although 1 heterotrimer is thought to be able to translocate proteins. Interacts with the ribosome. Interacts with SecDF, and other proteins may be involved. Interacts with SecA.</text>
</comment>
<comment type="subcellular location">
    <subcellularLocation>
        <location evidence="1">Cell inner membrane</location>
        <topology evidence="1">Multi-pass membrane protein</topology>
    </subcellularLocation>
</comment>
<comment type="similarity">
    <text evidence="1">Belongs to the SecY/SEC61-alpha family.</text>
</comment>
<evidence type="ECO:0000255" key="1">
    <source>
        <dbReference type="HAMAP-Rule" id="MF_01465"/>
    </source>
</evidence>
<gene>
    <name evidence="1" type="primary">secY</name>
    <name type="ordered locus">HI_0798</name>
</gene>
<accession>P43804</accession>
<keyword id="KW-0997">Cell inner membrane</keyword>
<keyword id="KW-1003">Cell membrane</keyword>
<keyword id="KW-0472">Membrane</keyword>
<keyword id="KW-0653">Protein transport</keyword>
<keyword id="KW-1185">Reference proteome</keyword>
<keyword id="KW-0811">Translocation</keyword>
<keyword id="KW-0812">Transmembrane</keyword>
<keyword id="KW-1133">Transmembrane helix</keyword>
<keyword id="KW-0813">Transport</keyword>
<proteinExistence type="inferred from homology"/>
<protein>
    <recommendedName>
        <fullName evidence="1">Protein translocase subunit SecY</fullName>
    </recommendedName>
</protein>
<feature type="chain" id="PRO_0000131724" description="Protein translocase subunit SecY">
    <location>
        <begin position="1"/>
        <end position="441"/>
    </location>
</feature>
<feature type="transmembrane region" description="Helical" evidence="1">
    <location>
        <begin position="24"/>
        <end position="44"/>
    </location>
</feature>
<feature type="transmembrane region" description="Helical" evidence="1">
    <location>
        <begin position="77"/>
        <end position="97"/>
    </location>
</feature>
<feature type="transmembrane region" description="Helical" evidence="1">
    <location>
        <begin position="123"/>
        <end position="143"/>
    </location>
</feature>
<feature type="transmembrane region" description="Helical" evidence="1">
    <location>
        <begin position="152"/>
        <end position="172"/>
    </location>
</feature>
<feature type="transmembrane region" description="Helical" evidence="1">
    <location>
        <begin position="181"/>
        <end position="201"/>
    </location>
</feature>
<feature type="transmembrane region" description="Helical" evidence="1">
    <location>
        <begin position="215"/>
        <end position="235"/>
    </location>
</feature>
<feature type="transmembrane region" description="Helical" evidence="1">
    <location>
        <begin position="272"/>
        <end position="292"/>
    </location>
</feature>
<feature type="transmembrane region" description="Helical" evidence="1">
    <location>
        <begin position="313"/>
        <end position="333"/>
    </location>
</feature>
<feature type="transmembrane region" description="Helical" evidence="1">
    <location>
        <begin position="373"/>
        <end position="393"/>
    </location>
</feature>
<feature type="transmembrane region" description="Helical" evidence="1">
    <location>
        <begin position="397"/>
        <end position="417"/>
    </location>
</feature>
<organism>
    <name type="scientific">Haemophilus influenzae (strain ATCC 51907 / DSM 11121 / KW20 / Rd)</name>
    <dbReference type="NCBI Taxonomy" id="71421"/>
    <lineage>
        <taxon>Bacteria</taxon>
        <taxon>Pseudomonadati</taxon>
        <taxon>Pseudomonadota</taxon>
        <taxon>Gammaproteobacteria</taxon>
        <taxon>Pasteurellales</taxon>
        <taxon>Pasteurellaceae</taxon>
        <taxon>Haemophilus</taxon>
    </lineage>
</organism>
<name>SECY_HAEIN</name>
<sequence length="441" mass="48290">MAKQPGYQARSTNSGKGELKSRLLFVLGALIVYRIGSFIPVPGIDAAVLAQLVEQQKGTIIDMFNMFSGGALSRASILALGIMPYISASIVIQLLATVSPALAELKKEGAAGQRKISKYTRYATVVFATIQAVAISTGLPNMLSGLVPNVGFSFYFTSVVSLVTGTMFLMWLGEQITERGIGNGISILVFGGIVAGLPSAILQTIEQARQGQMHPLVLLLIAAIVFAVTYFVVFVERGQRRIRVEYAKRQQGRQILGGHSTHLPLKVNMANVMPAIFASSIILFPATLTQWFGQNDKFEWLNNLSMLLNPGQPLYLLVYAVAIIFFSFFYTAMQYNPRDTADNLKKSGAFIPGIRPGEQTSRYIDKVMTRLTLIGGLYVTFVCLVPYIMTSAWDVKFYFGGTSLLIVVVVIMDFIVQVQSHLMSSQYESALKKANLKGFGQ</sequence>